<dbReference type="EMBL" id="CP001251">
    <property type="protein sequence ID" value="ACK42559.1"/>
    <property type="molecule type" value="Genomic_DNA"/>
</dbReference>
<dbReference type="RefSeq" id="WP_012583641.1">
    <property type="nucleotide sequence ID" value="NC_011661.1"/>
</dbReference>
<dbReference type="RefSeq" id="YP_002353173.1">
    <property type="nucleotide sequence ID" value="NC_011661.1"/>
</dbReference>
<dbReference type="SMR" id="B8E0B4"/>
<dbReference type="FunCoup" id="B8E0B4">
    <property type="interactions" value="327"/>
</dbReference>
<dbReference type="STRING" id="515635.Dtur_1281"/>
<dbReference type="EnsemblBacteria" id="ACK42559">
    <property type="protein sequence ID" value="ACK42559"/>
    <property type="gene ID" value="Dtur_1281"/>
</dbReference>
<dbReference type="KEGG" id="dtu:Dtur_1281"/>
<dbReference type="PATRIC" id="fig|515635.4.peg.1321"/>
<dbReference type="eggNOG" id="COG0261">
    <property type="taxonomic scope" value="Bacteria"/>
</dbReference>
<dbReference type="HOGENOM" id="CLU_061463_3_2_0"/>
<dbReference type="InParanoid" id="B8E0B4"/>
<dbReference type="OrthoDB" id="9813334at2"/>
<dbReference type="Proteomes" id="UP000007719">
    <property type="component" value="Chromosome"/>
</dbReference>
<dbReference type="GO" id="GO:0005737">
    <property type="term" value="C:cytoplasm"/>
    <property type="evidence" value="ECO:0007669"/>
    <property type="project" value="UniProtKB-ARBA"/>
</dbReference>
<dbReference type="GO" id="GO:1990904">
    <property type="term" value="C:ribonucleoprotein complex"/>
    <property type="evidence" value="ECO:0007669"/>
    <property type="project" value="UniProtKB-KW"/>
</dbReference>
<dbReference type="GO" id="GO:0005840">
    <property type="term" value="C:ribosome"/>
    <property type="evidence" value="ECO:0007669"/>
    <property type="project" value="UniProtKB-KW"/>
</dbReference>
<dbReference type="GO" id="GO:0019843">
    <property type="term" value="F:rRNA binding"/>
    <property type="evidence" value="ECO:0007669"/>
    <property type="project" value="UniProtKB-UniRule"/>
</dbReference>
<dbReference type="GO" id="GO:0003735">
    <property type="term" value="F:structural constituent of ribosome"/>
    <property type="evidence" value="ECO:0000318"/>
    <property type="project" value="GO_Central"/>
</dbReference>
<dbReference type="GO" id="GO:0006412">
    <property type="term" value="P:translation"/>
    <property type="evidence" value="ECO:0007669"/>
    <property type="project" value="UniProtKB-UniRule"/>
</dbReference>
<dbReference type="HAMAP" id="MF_01363">
    <property type="entry name" value="Ribosomal_bL21"/>
    <property type="match status" value="1"/>
</dbReference>
<dbReference type="InterPro" id="IPR028909">
    <property type="entry name" value="bL21-like"/>
</dbReference>
<dbReference type="InterPro" id="IPR036164">
    <property type="entry name" value="bL21-like_sf"/>
</dbReference>
<dbReference type="InterPro" id="IPR001787">
    <property type="entry name" value="Ribosomal_bL21"/>
</dbReference>
<dbReference type="InterPro" id="IPR018258">
    <property type="entry name" value="Ribosomal_bL21_CS"/>
</dbReference>
<dbReference type="NCBIfam" id="TIGR00061">
    <property type="entry name" value="L21"/>
    <property type="match status" value="1"/>
</dbReference>
<dbReference type="PANTHER" id="PTHR21349">
    <property type="entry name" value="50S RIBOSOMAL PROTEIN L21"/>
    <property type="match status" value="1"/>
</dbReference>
<dbReference type="PANTHER" id="PTHR21349:SF0">
    <property type="entry name" value="LARGE RIBOSOMAL SUBUNIT PROTEIN BL21M"/>
    <property type="match status" value="1"/>
</dbReference>
<dbReference type="Pfam" id="PF00829">
    <property type="entry name" value="Ribosomal_L21p"/>
    <property type="match status" value="1"/>
</dbReference>
<dbReference type="SUPFAM" id="SSF141091">
    <property type="entry name" value="L21p-like"/>
    <property type="match status" value="1"/>
</dbReference>
<dbReference type="PROSITE" id="PS01169">
    <property type="entry name" value="RIBOSOMAL_L21"/>
    <property type="match status" value="1"/>
</dbReference>
<reference key="1">
    <citation type="journal article" date="2016" name="Front. Microbiol.">
        <title>The complete genome sequence of hyperthermophile Dictyoglomus turgidum DSM 6724 reveals a specialized carbohydrate fermentor.</title>
        <authorList>
            <person name="Brumm P.J."/>
            <person name="Gowda K."/>
            <person name="Robb F.T."/>
            <person name="Mead D.A."/>
        </authorList>
    </citation>
    <scope>NUCLEOTIDE SEQUENCE [LARGE SCALE GENOMIC DNA]</scope>
    <source>
        <strain>DSM 6724 / Z-1310</strain>
    </source>
</reference>
<organism>
    <name type="scientific">Dictyoglomus turgidum (strain DSM 6724 / Z-1310)</name>
    <dbReference type="NCBI Taxonomy" id="515635"/>
    <lineage>
        <taxon>Bacteria</taxon>
        <taxon>Pseudomonadati</taxon>
        <taxon>Dictyoglomota</taxon>
        <taxon>Dictyoglomia</taxon>
        <taxon>Dictyoglomales</taxon>
        <taxon>Dictyoglomaceae</taxon>
        <taxon>Dictyoglomus</taxon>
    </lineage>
</organism>
<proteinExistence type="inferred from homology"/>
<evidence type="ECO:0000255" key="1">
    <source>
        <dbReference type="HAMAP-Rule" id="MF_01363"/>
    </source>
</evidence>
<evidence type="ECO:0000305" key="2"/>
<feature type="chain" id="PRO_1000143787" description="Large ribosomal subunit protein bL21">
    <location>
        <begin position="1"/>
        <end position="105"/>
    </location>
</feature>
<sequence length="105" mass="12039">MFVVVETGGKQYKVSVGSMVNVEKLKANVGDEVVLDKVLLVGKEDEVIIGQPYVEGAKVIAKVVRQDKYPKVIVFKFKRKKHYRRKYGHRQPYTQLSIKEIVLPH</sequence>
<name>RL21_DICTD</name>
<comment type="function">
    <text evidence="1">This protein binds to 23S rRNA in the presence of protein L20.</text>
</comment>
<comment type="subunit">
    <text evidence="1">Part of the 50S ribosomal subunit. Contacts protein L20.</text>
</comment>
<comment type="similarity">
    <text evidence="1">Belongs to the bacterial ribosomal protein bL21 family.</text>
</comment>
<gene>
    <name evidence="1" type="primary">rplU</name>
    <name type="ordered locus">Dtur_1281</name>
</gene>
<protein>
    <recommendedName>
        <fullName evidence="1">Large ribosomal subunit protein bL21</fullName>
    </recommendedName>
    <alternativeName>
        <fullName evidence="2">50S ribosomal protein L21</fullName>
    </alternativeName>
</protein>
<accession>B8E0B4</accession>
<keyword id="KW-1185">Reference proteome</keyword>
<keyword id="KW-0687">Ribonucleoprotein</keyword>
<keyword id="KW-0689">Ribosomal protein</keyword>
<keyword id="KW-0694">RNA-binding</keyword>
<keyword id="KW-0699">rRNA-binding</keyword>